<accession>A7GC78</accession>
<organism>
    <name type="scientific">Clostridium botulinum (strain Langeland / NCTC 10281 / Type F)</name>
    <dbReference type="NCBI Taxonomy" id="441772"/>
    <lineage>
        <taxon>Bacteria</taxon>
        <taxon>Bacillati</taxon>
        <taxon>Bacillota</taxon>
        <taxon>Clostridia</taxon>
        <taxon>Eubacteriales</taxon>
        <taxon>Clostridiaceae</taxon>
        <taxon>Clostridium</taxon>
    </lineage>
</organism>
<name>TLP_CLOBL</name>
<evidence type="ECO:0000255" key="1">
    <source>
        <dbReference type="HAMAP-Rule" id="MF_01506"/>
    </source>
</evidence>
<evidence type="ECO:0000256" key="2">
    <source>
        <dbReference type="SAM" id="MobiDB-lite"/>
    </source>
</evidence>
<protein>
    <recommendedName>
        <fullName evidence="1">Protein Tlp homolog</fullName>
    </recommendedName>
</protein>
<sequence length="75" mass="8948">MKNKPDDRKDNVDKIQYNITKTIQNCELADEMIAKTDDEKTKKTLIEKNERRREALDGMREEIKDEARDKKNGYM</sequence>
<reference key="1">
    <citation type="submission" date="2007-06" db="EMBL/GenBank/DDBJ databases">
        <authorList>
            <person name="Brinkac L.M."/>
            <person name="Daugherty S."/>
            <person name="Dodson R.J."/>
            <person name="Madupu R."/>
            <person name="Brown J.L."/>
            <person name="Bruce D."/>
            <person name="Detter C."/>
            <person name="Munk C."/>
            <person name="Smith L.A."/>
            <person name="Smith T.J."/>
            <person name="White O."/>
            <person name="Brettin T.S."/>
        </authorList>
    </citation>
    <scope>NUCLEOTIDE SEQUENCE [LARGE SCALE GENOMIC DNA]</scope>
    <source>
        <strain>Langeland / NCTC 10281 / Type F</strain>
    </source>
</reference>
<comment type="similarity">
    <text evidence="1">Belongs to the Tlp family.</text>
</comment>
<dbReference type="EMBL" id="CP000728">
    <property type="protein sequence ID" value="ABS41244.1"/>
    <property type="molecule type" value="Genomic_DNA"/>
</dbReference>
<dbReference type="RefSeq" id="WP_011987946.1">
    <property type="nucleotide sequence ID" value="NC_009699.1"/>
</dbReference>
<dbReference type="SMR" id="A7GC78"/>
<dbReference type="KEGG" id="cbf:CLI_1122"/>
<dbReference type="HOGENOM" id="CLU_178266_1_1_9"/>
<dbReference type="Proteomes" id="UP000002410">
    <property type="component" value="Chromosome"/>
</dbReference>
<dbReference type="HAMAP" id="MF_01506">
    <property type="entry name" value="Tlp"/>
    <property type="match status" value="1"/>
</dbReference>
<dbReference type="InterPro" id="IPR017524">
    <property type="entry name" value="SASP_thioredoxin-like"/>
</dbReference>
<dbReference type="NCBIfam" id="TIGR03090">
    <property type="entry name" value="SASP_tlp"/>
    <property type="match status" value="1"/>
</dbReference>
<dbReference type="Pfam" id="PF19824">
    <property type="entry name" value="Tlp"/>
    <property type="match status" value="1"/>
</dbReference>
<feature type="chain" id="PRO_0000315209" description="Protein Tlp homolog">
    <location>
        <begin position="1"/>
        <end position="75"/>
    </location>
</feature>
<feature type="region of interest" description="Disordered" evidence="2">
    <location>
        <begin position="53"/>
        <end position="75"/>
    </location>
</feature>
<proteinExistence type="inferred from homology"/>
<gene>
    <name evidence="1" type="primary">tlp</name>
    <name type="ordered locus">CLI_1122</name>
</gene>